<gene>
    <name evidence="1" type="primary">HA</name>
</gene>
<organismHost>
    <name type="scientific">Aves</name>
    <dbReference type="NCBI Taxonomy" id="8782"/>
</organismHost>
<organismHost>
    <name type="scientific">Equus caballus</name>
    <name type="common">Horse</name>
    <dbReference type="NCBI Taxonomy" id="9796"/>
</organismHost>
<accession>P16999</accession>
<accession>Q6TXB8</accession>
<accession>Q84000</accession>
<accession>Q84001</accession>
<sequence length="565" mass="63665">MKTTIILILLTHWVYSQNPTSGNNTATLCLGHHAVANGTLVKTITDDQIEVTNATELVQSISIGKICNNPYRVLDGRNCTLIDAMLGYPHCDVFQYENWDLFIERSSTFSNCYPYDIPDYASLRSIVASSGTLEFTAEGFTWTGVTQNGRSGACKRGSADSFFSRLNWLTKSGNSYPTLNVTMPNNNNFDKLYIWGIHHPSSNNEQTKLYIQESGRVTVSTKRSQQTIIPNIGSRPGIRGQSGRISIYWTIVKPGDILMVNSNGNLVAPRGYFKMRTGKSSVMRSDAPIDTCVSECITPNGSIPNDKPFQNVNKVTYGKCPKYIKQNTLKLATGMRNVPEKQIRGIFGAIAGFIENGWEGMVDGWYGFRYQNSEGTGQAGDLKSTQAAIDQINGKLNRVIERTNEKFHQIEKEFSEVEGRIQDLEKYVEDTKIDLWSYNAELLVALENQHTIDLTDAEMNKLFEKTRRQLRENAEDMGGGCFKIYHKCDNACIGSIRNGTYDHYIYRDEALNNRFQIRGVELKSGYKDWILWISFAISCFLICVVLLGFIMWACQKGNIRCNICI</sequence>
<dbReference type="EMBL" id="M24725">
    <property type="protein sequence ID" value="AAA43110.1"/>
    <property type="molecule type" value="Genomic_RNA"/>
</dbReference>
<dbReference type="EMBL" id="AY383755">
    <property type="protein sequence ID" value="AAQ90291.1"/>
    <property type="molecule type" value="mRNA"/>
</dbReference>
<dbReference type="SMR" id="P16999"/>
<dbReference type="GlyCosmos" id="P16999">
    <property type="glycosylation" value="7 sites, No reported glycans"/>
</dbReference>
<dbReference type="GO" id="GO:0020002">
    <property type="term" value="C:host cell plasma membrane"/>
    <property type="evidence" value="ECO:0007669"/>
    <property type="project" value="UniProtKB-SubCell"/>
</dbReference>
<dbReference type="GO" id="GO:0016020">
    <property type="term" value="C:membrane"/>
    <property type="evidence" value="ECO:0007669"/>
    <property type="project" value="UniProtKB-UniRule"/>
</dbReference>
<dbReference type="GO" id="GO:0019031">
    <property type="term" value="C:viral envelope"/>
    <property type="evidence" value="ECO:0007669"/>
    <property type="project" value="UniProtKB-UniRule"/>
</dbReference>
<dbReference type="GO" id="GO:0055036">
    <property type="term" value="C:virion membrane"/>
    <property type="evidence" value="ECO:0007669"/>
    <property type="project" value="UniProtKB-SubCell"/>
</dbReference>
<dbReference type="GO" id="GO:0046789">
    <property type="term" value="F:host cell surface receptor binding"/>
    <property type="evidence" value="ECO:0007669"/>
    <property type="project" value="UniProtKB-UniRule"/>
</dbReference>
<dbReference type="GO" id="GO:0075512">
    <property type="term" value="P:clathrin-dependent endocytosis of virus by host cell"/>
    <property type="evidence" value="ECO:0007669"/>
    <property type="project" value="UniProtKB-UniRule"/>
</dbReference>
<dbReference type="GO" id="GO:0039654">
    <property type="term" value="P:fusion of virus membrane with host endosome membrane"/>
    <property type="evidence" value="ECO:0007669"/>
    <property type="project" value="UniProtKB-UniRule"/>
</dbReference>
<dbReference type="GO" id="GO:0019064">
    <property type="term" value="P:fusion of virus membrane with host plasma membrane"/>
    <property type="evidence" value="ECO:0007669"/>
    <property type="project" value="InterPro"/>
</dbReference>
<dbReference type="GO" id="GO:0046761">
    <property type="term" value="P:viral budding from plasma membrane"/>
    <property type="evidence" value="ECO:0007669"/>
    <property type="project" value="UniProtKB-UniRule"/>
</dbReference>
<dbReference type="GO" id="GO:0019062">
    <property type="term" value="P:virion attachment to host cell"/>
    <property type="evidence" value="ECO:0007669"/>
    <property type="project" value="UniProtKB-KW"/>
</dbReference>
<dbReference type="FunFam" id="3.90.20.10:FF:000001">
    <property type="entry name" value="Hemagglutinin"/>
    <property type="match status" value="1"/>
</dbReference>
<dbReference type="FunFam" id="3.90.209.20:FF:000001">
    <property type="entry name" value="Hemagglutinin"/>
    <property type="match status" value="1"/>
</dbReference>
<dbReference type="Gene3D" id="3.90.20.10">
    <property type="match status" value="1"/>
</dbReference>
<dbReference type="Gene3D" id="3.90.209.20">
    <property type="match status" value="1"/>
</dbReference>
<dbReference type="HAMAP" id="MF_04072">
    <property type="entry name" value="INFV_HEMA"/>
    <property type="match status" value="1"/>
</dbReference>
<dbReference type="InterPro" id="IPR008980">
    <property type="entry name" value="Capsid_hemagglutn"/>
</dbReference>
<dbReference type="InterPro" id="IPR013828">
    <property type="entry name" value="Hemagglutn_HA1_a/b_dom_sf"/>
</dbReference>
<dbReference type="InterPro" id="IPR000149">
    <property type="entry name" value="Hemagglutn_influenz_A"/>
</dbReference>
<dbReference type="InterPro" id="IPR001364">
    <property type="entry name" value="Hemagglutn_influenz_A/B"/>
</dbReference>
<dbReference type="Pfam" id="PF00509">
    <property type="entry name" value="Hemagglutinin"/>
    <property type="match status" value="1"/>
</dbReference>
<dbReference type="PRINTS" id="PR00330">
    <property type="entry name" value="HEMAGGLUTN1"/>
</dbReference>
<dbReference type="PRINTS" id="PR00329">
    <property type="entry name" value="HEMAGGLUTN12"/>
</dbReference>
<dbReference type="SUPFAM" id="SSF58064">
    <property type="entry name" value="Influenza hemagglutinin (stalk)"/>
    <property type="match status" value="1"/>
</dbReference>
<dbReference type="SUPFAM" id="SSF49818">
    <property type="entry name" value="Viral protein domain"/>
    <property type="match status" value="1"/>
</dbReference>
<feature type="signal peptide" evidence="1">
    <location>
        <begin position="1"/>
        <end position="16"/>
    </location>
</feature>
<feature type="chain" id="PRO_0000440515" description="Hemagglutinin" evidence="1">
    <location>
        <begin position="17"/>
        <end position="565"/>
    </location>
</feature>
<feature type="chain" id="PRO_0000038996" description="Hemagglutinin HA1 chain">
    <location>
        <begin position="17"/>
        <end position="343"/>
    </location>
</feature>
<feature type="chain" id="PRO_0000038997" description="Hemagglutinin HA2 chain" evidence="1">
    <location>
        <begin position="345"/>
        <end position="565"/>
    </location>
</feature>
<feature type="topological domain" description="Extracellular" evidence="1">
    <location>
        <begin position="17"/>
        <end position="529"/>
    </location>
</feature>
<feature type="transmembrane region" description="Helical" evidence="1">
    <location>
        <begin position="530"/>
        <end position="550"/>
    </location>
</feature>
<feature type="topological domain" description="Cytoplasmic" evidence="1">
    <location>
        <begin position="551"/>
        <end position="565"/>
    </location>
</feature>
<feature type="site" description="Cleavage; by host" evidence="1">
    <location>
        <begin position="344"/>
        <end position="345"/>
    </location>
</feature>
<feature type="lipid moiety-binding region" description="S-palmitoyl cysteine; by host" evidence="1">
    <location>
        <position position="554"/>
    </location>
</feature>
<feature type="lipid moiety-binding region" description="S-palmitoyl cysteine; by host" evidence="1">
    <location>
        <position position="561"/>
    </location>
</feature>
<feature type="lipid moiety-binding region" description="S-palmitoyl cysteine; by host" evidence="1">
    <location>
        <position position="564"/>
    </location>
</feature>
<feature type="glycosylation site" description="N-linked (GlcNAc...) asparagine; by host" evidence="1">
    <location>
        <position position="23"/>
    </location>
</feature>
<feature type="glycosylation site" description="N-linked (GlcNAc...) asparagine; by host" evidence="1">
    <location>
        <position position="37"/>
    </location>
</feature>
<feature type="glycosylation site" description="N-linked (GlcNAc...) asparagine; by host" evidence="1">
    <location>
        <position position="53"/>
    </location>
</feature>
<feature type="glycosylation site" description="N-linked (GlcNAc...) asparagine; by host" evidence="1">
    <location>
        <position position="78"/>
    </location>
</feature>
<feature type="glycosylation site" description="N-linked (GlcNAc...) asparagine; by host" evidence="1">
    <location>
        <position position="180"/>
    </location>
</feature>
<feature type="glycosylation site" description="N-linked (GlcNAc...) asparagine; by host" evidence="1">
    <location>
        <position position="300"/>
    </location>
</feature>
<feature type="glycosylation site" description="N-linked (GlcNAc...) asparagine; by host" evidence="1">
    <location>
        <position position="498"/>
    </location>
</feature>
<feature type="disulfide bond" description="Interchain (between HA1 and HA2 chains)" evidence="1">
    <location>
        <begin position="29"/>
        <end position="481"/>
    </location>
</feature>
<feature type="disulfide bond" evidence="1">
    <location>
        <begin position="67"/>
        <end position="292"/>
    </location>
</feature>
<feature type="disulfide bond" evidence="1">
    <location>
        <begin position="79"/>
        <end position="91"/>
    </location>
</feature>
<feature type="disulfide bond" evidence="1">
    <location>
        <begin position="112"/>
        <end position="154"/>
    </location>
</feature>
<feature type="disulfide bond" evidence="1">
    <location>
        <begin position="296"/>
        <end position="320"/>
    </location>
</feature>
<feature type="disulfide bond" evidence="1">
    <location>
        <begin position="488"/>
        <end position="492"/>
    </location>
</feature>
<feature type="sequence conflict" description="In Ref. 2; AAQ90291." evidence="2" ref="2">
    <original>Y</original>
    <variation>D</variation>
    <location>
        <position position="88"/>
    </location>
</feature>
<feature type="sequence conflict" description="In Ref. 2; AAQ90291." evidence="2" ref="2">
    <original>K</original>
    <variation>N</variation>
    <location>
        <position position="208"/>
    </location>
</feature>
<feature type="sequence conflict" description="In Ref. 2; AAQ90291." evidence="2" ref="2">
    <original>Q</original>
    <variation>R</variation>
    <location>
        <position position="225"/>
    </location>
</feature>
<feature type="sequence conflict" description="In Ref. 2; AAQ90291." evidence="2" ref="2">
    <original>G</original>
    <variation>W</variation>
    <location>
        <position position="237"/>
    </location>
</feature>
<feature type="sequence conflict" description="In Ref. 2; AAQ90291." evidence="2" ref="2">
    <original>V</original>
    <variation>I</variation>
    <location>
        <position position="260"/>
    </location>
</feature>
<feature type="sequence conflict" description="In Ref. 2; AAQ90291." evidence="2" ref="2">
    <original>G</original>
    <variation>A</variation>
    <location>
        <position position="380"/>
    </location>
</feature>
<feature type="sequence conflict" description="In Ref. 2; AAQ90291." evidence="2" ref="2">
    <original>R</original>
    <variation>K</variation>
    <location>
        <position position="518"/>
    </location>
</feature>
<keyword id="KW-1167">Clathrin- and caveolin-independent endocytosis of virus by host</keyword>
<keyword id="KW-1165">Clathrin-mediated endocytosis of virus by host</keyword>
<keyword id="KW-1015">Disulfide bond</keyword>
<keyword id="KW-1170">Fusion of virus membrane with host endosomal membrane</keyword>
<keyword id="KW-1168">Fusion of virus membrane with host membrane</keyword>
<keyword id="KW-0325">Glycoprotein</keyword>
<keyword id="KW-0348">Hemagglutinin</keyword>
<keyword id="KW-1032">Host cell membrane</keyword>
<keyword id="KW-1043">Host membrane</keyword>
<keyword id="KW-0945">Host-virus interaction</keyword>
<keyword id="KW-0449">Lipoprotein</keyword>
<keyword id="KW-0472">Membrane</keyword>
<keyword id="KW-0564">Palmitate</keyword>
<keyword id="KW-0732">Signal</keyword>
<keyword id="KW-0812">Transmembrane</keyword>
<keyword id="KW-1133">Transmembrane helix</keyword>
<keyword id="KW-1161">Viral attachment to host cell</keyword>
<keyword id="KW-0261">Viral envelope protein</keyword>
<keyword id="KW-1162">Viral penetration into host cytoplasm</keyword>
<keyword id="KW-0946">Virion</keyword>
<keyword id="KW-1164">Virus endocytosis by host</keyword>
<keyword id="KW-1160">Virus entry into host cell</keyword>
<comment type="function">
    <text>Binds to sialic acid-containing receptors on the cell surface, bringing about the attachment of the virus particle to the cell. This attachment induces virion internalization of about two third of the virus particles through clathrin-dependent endocytosis and about one third through a clathrin- and caveolin-independent pathway. Plays a major role in the determination of host range restriction and virulence. Class I viral fusion protein. Responsible for penetration of the virus into the cell cytoplasm by mediating the fusion of the membrane of the endocytosed virus particle with the endosomal membrane. Low pH in endosomes induces an irreversible conformational change in HA2, releasing the fusion hydrophobic peptide. Several trimers are required to form a competent fusion pore.</text>
</comment>
<comment type="function">
    <text evidence="1">Binds to sialic acid-containing receptors on the cell surface, bringing about the attachment of the virus particle to the cell. This attachment induces virion internalization either through clathrin-dependent endocytosis or through clathrin- and caveolin-independent pathway. Plays a major role in the determination of host range restriction and virulence. Class I viral fusion protein. Responsible for penetration of the virus into the cell cytoplasm by mediating the fusion of the membrane of the endocytosed virus particle with the endosomal membrane. Low pH in endosomes induces an irreversible conformational change in HA2, releasing the fusion hydrophobic peptide. Several trimers are required to form a competent fusion pore.</text>
</comment>
<comment type="subunit">
    <text evidence="1">Homotrimer of disulfide-linked HA1-HA2.</text>
</comment>
<comment type="subcellular location">
    <subcellularLocation>
        <location evidence="1">Virion membrane</location>
        <topology evidence="1">Single-pass type I membrane protein</topology>
    </subcellularLocation>
    <subcellularLocation>
        <location evidence="1">Host apical cell membrane</location>
        <topology evidence="1">Single-pass type I membrane protein</topology>
    </subcellularLocation>
    <text evidence="1">Targeted to the apical plasma membrane in epithelial polarized cells through a signal present in the transmembrane domain. Associated with glycosphingolipid- and cholesterol-enriched detergent-resistant lipid rafts.</text>
</comment>
<comment type="PTM">
    <text evidence="1">Palmitoylated.</text>
</comment>
<comment type="PTM">
    <text evidence="1">In natural infection, inactive HA is matured into HA1 and HA2 outside the cell by one or more trypsin-like, arginine-specific endoprotease secreted by the bronchial epithelial cells. One identified protease that may be involved in this process is secreted in lungs by club cells.</text>
</comment>
<comment type="miscellaneous">
    <text>Major glycoprotein, comprises over 80% of the envelope proteins present in virus particle.</text>
</comment>
<comment type="miscellaneous">
    <text>The extent of infection into host organism is determined by HA. Influenza viruses bud from the apical surface of polarized epithelial cells (e.g. bronchial epithelial cells) into lumen of lungs and are therefore usually pneumotropic. The reason is that HA is cleaved by tryptase clara which is restricted to lungs. However, HAs of H5 and H7 pantropic avian viruses subtypes can be cleaved by furin and subtilisin-type enzymes, allowing the virus to grow in other organs than lungs.</text>
</comment>
<comment type="miscellaneous">
    <text evidence="2">The influenza A genome consist of 8 RNA segments. Genetic variation of hemagglutinin and/or neuraminidase genes results in the emergence of new influenza strains. The mechanism of variation can be the result of point mutations or the result of genetic reassortment between segments of two different strains.</text>
</comment>
<comment type="similarity">
    <text evidence="1">Belongs to the influenza viruses hemagglutinin family.</text>
</comment>
<protein>
    <recommendedName>
        <fullName evidence="1">Hemagglutinin</fullName>
    </recommendedName>
    <component>
        <recommendedName>
            <fullName evidence="1">Hemagglutinin HA1 chain</fullName>
        </recommendedName>
    </component>
    <component>
        <recommendedName>
            <fullName evidence="1">Hemagglutinin HA2 chain</fullName>
        </recommendedName>
    </component>
</protein>
<organism>
    <name type="scientific">Influenza A virus (strain A/Equine/Santiago/1/1985 H3N8)</name>
    <dbReference type="NCBI Taxonomy" id="11414"/>
    <lineage>
        <taxon>Viruses</taxon>
        <taxon>Riboviria</taxon>
        <taxon>Orthornavirae</taxon>
        <taxon>Negarnaviricota</taxon>
        <taxon>Polyploviricotina</taxon>
        <taxon>Insthoviricetes</taxon>
        <taxon>Articulavirales</taxon>
        <taxon>Orthomyxoviridae</taxon>
        <taxon>Alphainfluenzavirus</taxon>
        <taxon>Alphainfluenzavirus influenzae</taxon>
        <taxon>Influenza A virus</taxon>
    </lineage>
</organism>
<evidence type="ECO:0000255" key="1">
    <source>
        <dbReference type="HAMAP-Rule" id="MF_04072"/>
    </source>
</evidence>
<evidence type="ECO:0000305" key="2"/>
<name>HEMA_I85A5</name>
<reference key="1">
    <citation type="journal article" date="1989" name="Virology">
        <title>Evolution of the hemagglutinin of equine H3 influenza viruses.</title>
        <authorList>
            <person name="Kawaoka Y."/>
            <person name="Bean W.J."/>
            <person name="Webster R.G."/>
        </authorList>
    </citation>
    <scope>NUCLEOTIDE SEQUENCE [GENOMIC RNA]</scope>
</reference>
<reference key="2">
    <citation type="journal article" date="2005" name="Biol. Res.">
        <title>Isolation, sequencing and phylogenetic analysis of the hemagglutinin, neuraminidase and nucleoprotein genes of the Chilean equine influenza virus subtypes H7N7 and H3N8.</title>
        <authorList>
            <person name="Muller I."/>
            <person name="Jaureguiberry B."/>
            <person name="Valenzuela P.D.T."/>
        </authorList>
    </citation>
    <scope>NUCLEOTIDE SEQUENCE [GENOMIC RNA]</scope>
</reference>
<proteinExistence type="evidence at transcript level"/>